<sequence>MASTSDIRNGLCIRYNHDIYKITEFLHVKPGKGPAFVRTKLKSVTTGKVLDNTFSAGHKIEEIRVETHKFQFLYEDGEFWHFMNVEDYTQIRLTENALDMPKLIKEGEVVTILINTEDNMPLSVDMPASVVLEVTHTEPGVKGNTATNATKPATVETGFEVNVPLFINEGDKIKIETDKGTYKERIKE</sequence>
<proteinExistence type="inferred from homology"/>
<dbReference type="EMBL" id="CU207366">
    <property type="protein sequence ID" value="CAL66743.1"/>
    <property type="molecule type" value="Genomic_DNA"/>
</dbReference>
<dbReference type="RefSeq" id="WP_011709651.1">
    <property type="nucleotide sequence ID" value="NC_008571.1"/>
</dbReference>
<dbReference type="SMR" id="A0M298"/>
<dbReference type="STRING" id="411154.GFO_1773"/>
<dbReference type="KEGG" id="gfo:GFO_1773"/>
<dbReference type="eggNOG" id="COG0231">
    <property type="taxonomic scope" value="Bacteria"/>
</dbReference>
<dbReference type="HOGENOM" id="CLU_074944_0_1_10"/>
<dbReference type="OrthoDB" id="9801844at2"/>
<dbReference type="UniPathway" id="UPA00345"/>
<dbReference type="Proteomes" id="UP000000755">
    <property type="component" value="Chromosome"/>
</dbReference>
<dbReference type="GO" id="GO:0005737">
    <property type="term" value="C:cytoplasm"/>
    <property type="evidence" value="ECO:0007669"/>
    <property type="project" value="UniProtKB-SubCell"/>
</dbReference>
<dbReference type="GO" id="GO:0003746">
    <property type="term" value="F:translation elongation factor activity"/>
    <property type="evidence" value="ECO:0007669"/>
    <property type="project" value="UniProtKB-UniRule"/>
</dbReference>
<dbReference type="GO" id="GO:0043043">
    <property type="term" value="P:peptide biosynthetic process"/>
    <property type="evidence" value="ECO:0007669"/>
    <property type="project" value="InterPro"/>
</dbReference>
<dbReference type="CDD" id="cd04470">
    <property type="entry name" value="S1_EF-P_repeat_1"/>
    <property type="match status" value="1"/>
</dbReference>
<dbReference type="CDD" id="cd05794">
    <property type="entry name" value="S1_EF-P_repeat_2"/>
    <property type="match status" value="1"/>
</dbReference>
<dbReference type="FunFam" id="2.30.30.30:FF:000003">
    <property type="entry name" value="Elongation factor P"/>
    <property type="match status" value="1"/>
</dbReference>
<dbReference type="FunFam" id="2.40.50.140:FF:000004">
    <property type="entry name" value="Elongation factor P"/>
    <property type="match status" value="1"/>
</dbReference>
<dbReference type="Gene3D" id="2.30.30.30">
    <property type="match status" value="1"/>
</dbReference>
<dbReference type="Gene3D" id="2.40.50.140">
    <property type="entry name" value="Nucleic acid-binding proteins"/>
    <property type="match status" value="2"/>
</dbReference>
<dbReference type="HAMAP" id="MF_00141">
    <property type="entry name" value="EF_P"/>
    <property type="match status" value="1"/>
</dbReference>
<dbReference type="InterPro" id="IPR015365">
    <property type="entry name" value="Elong-fact-P_C"/>
</dbReference>
<dbReference type="InterPro" id="IPR012340">
    <property type="entry name" value="NA-bd_OB-fold"/>
</dbReference>
<dbReference type="InterPro" id="IPR014722">
    <property type="entry name" value="Rib_uL2_dom2"/>
</dbReference>
<dbReference type="InterPro" id="IPR020599">
    <property type="entry name" value="Transl_elong_fac_P/YeiP"/>
</dbReference>
<dbReference type="InterPro" id="IPR013185">
    <property type="entry name" value="Transl_elong_KOW-like"/>
</dbReference>
<dbReference type="InterPro" id="IPR001059">
    <property type="entry name" value="Transl_elong_P/YeiP_cen"/>
</dbReference>
<dbReference type="InterPro" id="IPR013852">
    <property type="entry name" value="Transl_elong_P/YeiP_CS"/>
</dbReference>
<dbReference type="InterPro" id="IPR011768">
    <property type="entry name" value="Transl_elongation_fac_P"/>
</dbReference>
<dbReference type="InterPro" id="IPR008991">
    <property type="entry name" value="Translation_prot_SH3-like_sf"/>
</dbReference>
<dbReference type="NCBIfam" id="TIGR00038">
    <property type="entry name" value="efp"/>
    <property type="match status" value="1"/>
</dbReference>
<dbReference type="NCBIfam" id="NF001810">
    <property type="entry name" value="PRK00529.1"/>
    <property type="match status" value="1"/>
</dbReference>
<dbReference type="PANTHER" id="PTHR30053">
    <property type="entry name" value="ELONGATION FACTOR P"/>
    <property type="match status" value="1"/>
</dbReference>
<dbReference type="PANTHER" id="PTHR30053:SF12">
    <property type="entry name" value="ELONGATION FACTOR P (EF-P) FAMILY PROTEIN"/>
    <property type="match status" value="1"/>
</dbReference>
<dbReference type="Pfam" id="PF01132">
    <property type="entry name" value="EFP"/>
    <property type="match status" value="1"/>
</dbReference>
<dbReference type="Pfam" id="PF08207">
    <property type="entry name" value="EFP_N"/>
    <property type="match status" value="1"/>
</dbReference>
<dbReference type="Pfam" id="PF09285">
    <property type="entry name" value="Elong-fact-P_C"/>
    <property type="match status" value="1"/>
</dbReference>
<dbReference type="PIRSF" id="PIRSF005901">
    <property type="entry name" value="EF-P"/>
    <property type="match status" value="1"/>
</dbReference>
<dbReference type="SMART" id="SM01185">
    <property type="entry name" value="EFP"/>
    <property type="match status" value="1"/>
</dbReference>
<dbReference type="SMART" id="SM00841">
    <property type="entry name" value="Elong-fact-P_C"/>
    <property type="match status" value="1"/>
</dbReference>
<dbReference type="SUPFAM" id="SSF50249">
    <property type="entry name" value="Nucleic acid-binding proteins"/>
    <property type="match status" value="2"/>
</dbReference>
<dbReference type="SUPFAM" id="SSF50104">
    <property type="entry name" value="Translation proteins SH3-like domain"/>
    <property type="match status" value="1"/>
</dbReference>
<dbReference type="PROSITE" id="PS01275">
    <property type="entry name" value="EFP"/>
    <property type="match status" value="1"/>
</dbReference>
<evidence type="ECO:0000255" key="1">
    <source>
        <dbReference type="HAMAP-Rule" id="MF_00141"/>
    </source>
</evidence>
<keyword id="KW-0963">Cytoplasm</keyword>
<keyword id="KW-0251">Elongation factor</keyword>
<keyword id="KW-0648">Protein biosynthesis</keyword>
<accession>A0M298</accession>
<organism>
    <name type="scientific">Christiangramia forsetii (strain DSM 17595 / CGMCC 1.15422 / KT0803)</name>
    <name type="common">Gramella forsetii</name>
    <dbReference type="NCBI Taxonomy" id="411154"/>
    <lineage>
        <taxon>Bacteria</taxon>
        <taxon>Pseudomonadati</taxon>
        <taxon>Bacteroidota</taxon>
        <taxon>Flavobacteriia</taxon>
        <taxon>Flavobacteriales</taxon>
        <taxon>Flavobacteriaceae</taxon>
        <taxon>Christiangramia</taxon>
    </lineage>
</organism>
<gene>
    <name evidence="1" type="primary">efp</name>
    <name type="ordered locus">GFO_1773</name>
</gene>
<feature type="chain" id="PRO_1000010753" description="Elongation factor P">
    <location>
        <begin position="1"/>
        <end position="188"/>
    </location>
</feature>
<comment type="function">
    <text evidence="1">Involved in peptide bond synthesis. Stimulates efficient translation and peptide-bond synthesis on native or reconstituted 70S ribosomes in vitro. Probably functions indirectly by altering the affinity of the ribosome for aminoacyl-tRNA, thus increasing their reactivity as acceptors for peptidyl transferase.</text>
</comment>
<comment type="pathway">
    <text evidence="1">Protein biosynthesis; polypeptide chain elongation.</text>
</comment>
<comment type="subcellular location">
    <subcellularLocation>
        <location evidence="1">Cytoplasm</location>
    </subcellularLocation>
</comment>
<comment type="similarity">
    <text evidence="1">Belongs to the elongation factor P family.</text>
</comment>
<reference key="1">
    <citation type="journal article" date="2006" name="Environ. Microbiol.">
        <title>Whole genome analysis of the marine Bacteroidetes'Gramella forsetii' reveals adaptations to degradation of polymeric organic matter.</title>
        <authorList>
            <person name="Bauer M."/>
            <person name="Kube M."/>
            <person name="Teeling H."/>
            <person name="Richter M."/>
            <person name="Lombardot T."/>
            <person name="Allers E."/>
            <person name="Wuerdemann C.A."/>
            <person name="Quast C."/>
            <person name="Kuhl H."/>
            <person name="Knaust F."/>
            <person name="Woebken D."/>
            <person name="Bischof K."/>
            <person name="Mussmann M."/>
            <person name="Choudhuri J.V."/>
            <person name="Meyer F."/>
            <person name="Reinhardt R."/>
            <person name="Amann R.I."/>
            <person name="Gloeckner F.O."/>
        </authorList>
    </citation>
    <scope>NUCLEOTIDE SEQUENCE [LARGE SCALE GENOMIC DNA]</scope>
    <source>
        <strain>DSM 17595 / CGMCC 1.15422 / KT0803</strain>
    </source>
</reference>
<protein>
    <recommendedName>
        <fullName evidence="1">Elongation factor P</fullName>
        <shortName evidence="1">EF-P</shortName>
    </recommendedName>
</protein>
<name>EFP_CHRFK</name>